<proteinExistence type="evidence at protein level"/>
<comment type="function">
    <text evidence="1 4 5">Nitrososynthase involved in the biosynthesis of rubradirin, an ansamycin antibiotic (Probable). In vitro, catalyzes the double-oxidation of TDP-L-epi-vancosamine to TDP-L-epi-vancosonitrose (PubMed:18983146). In vivo, probably catalyzes the formation of D-rubranitrose, the nitro sugar moiety of rubradirin (Probable).</text>
</comment>
<comment type="cofactor">
    <cofactor evidence="1">
        <name>FAD</name>
        <dbReference type="ChEBI" id="CHEBI:57692"/>
    </cofactor>
</comment>
<comment type="pathway">
    <text evidence="4">Antibiotic biosynthesis.</text>
</comment>
<comment type="similarity">
    <text evidence="3">Belongs to the acyl-CoA dehydrogenase family.</text>
</comment>
<protein>
    <recommendedName>
        <fullName evidence="3">Amino sugar nitrososynthase RubN8</fullName>
        <ecNumber evidence="1">1.14.13.-</ecNumber>
    </recommendedName>
</protein>
<dbReference type="EC" id="1.14.13.-" evidence="1"/>
<dbReference type="EMBL" id="AJ871581">
    <property type="protein sequence ID" value="CAI94696.1"/>
    <property type="molecule type" value="Genomic_DNA"/>
</dbReference>
<dbReference type="SMR" id="Q2PC69"/>
<dbReference type="GO" id="GO:0003995">
    <property type="term" value="F:acyl-CoA dehydrogenase activity"/>
    <property type="evidence" value="ECO:0007669"/>
    <property type="project" value="TreeGrafter"/>
</dbReference>
<dbReference type="GO" id="GO:0050660">
    <property type="term" value="F:flavin adenine dinucleotide binding"/>
    <property type="evidence" value="ECO:0007669"/>
    <property type="project" value="InterPro"/>
</dbReference>
<dbReference type="GO" id="GO:0004497">
    <property type="term" value="F:monooxygenase activity"/>
    <property type="evidence" value="ECO:0007669"/>
    <property type="project" value="UniProtKB-KW"/>
</dbReference>
<dbReference type="GO" id="GO:0017000">
    <property type="term" value="P:antibiotic biosynthetic process"/>
    <property type="evidence" value="ECO:0007669"/>
    <property type="project" value="UniProtKB-KW"/>
</dbReference>
<dbReference type="CDD" id="cd00567">
    <property type="entry name" value="ACAD"/>
    <property type="match status" value="1"/>
</dbReference>
<dbReference type="Gene3D" id="1.10.540.10">
    <property type="entry name" value="Acyl-CoA dehydrogenase/oxidase, N-terminal domain"/>
    <property type="match status" value="1"/>
</dbReference>
<dbReference type="Gene3D" id="2.40.110.10">
    <property type="entry name" value="Butyryl-CoA Dehydrogenase, subunit A, domain 2"/>
    <property type="match status" value="1"/>
</dbReference>
<dbReference type="Gene3D" id="1.20.140.10">
    <property type="entry name" value="Butyryl-CoA Dehydrogenase, subunit A, domain 3"/>
    <property type="match status" value="1"/>
</dbReference>
<dbReference type="InterPro" id="IPR006091">
    <property type="entry name" value="Acyl-CoA_Oxase/DH_mid-dom"/>
</dbReference>
<dbReference type="InterPro" id="IPR046373">
    <property type="entry name" value="Acyl-CoA_Oxase/DH_mid-dom_sf"/>
</dbReference>
<dbReference type="InterPro" id="IPR036250">
    <property type="entry name" value="AcylCo_DH-like_C"/>
</dbReference>
<dbReference type="InterPro" id="IPR009075">
    <property type="entry name" value="AcylCo_DH/oxidase_C"/>
</dbReference>
<dbReference type="InterPro" id="IPR013786">
    <property type="entry name" value="AcylCoA_DH/ox_N"/>
</dbReference>
<dbReference type="InterPro" id="IPR037069">
    <property type="entry name" value="AcylCoA_DH/ox_N_sf"/>
</dbReference>
<dbReference type="InterPro" id="IPR009100">
    <property type="entry name" value="AcylCoA_DH/oxidase_NM_dom_sf"/>
</dbReference>
<dbReference type="PANTHER" id="PTHR43884">
    <property type="entry name" value="ACYL-COA DEHYDROGENASE"/>
    <property type="match status" value="1"/>
</dbReference>
<dbReference type="PANTHER" id="PTHR43884:SF25">
    <property type="entry name" value="ACYL-COA DEHYDROGENASE YDBM-RELATED"/>
    <property type="match status" value="1"/>
</dbReference>
<dbReference type="Pfam" id="PF00441">
    <property type="entry name" value="Acyl-CoA_dh_1"/>
    <property type="match status" value="1"/>
</dbReference>
<dbReference type="Pfam" id="PF02770">
    <property type="entry name" value="Acyl-CoA_dh_M"/>
    <property type="match status" value="1"/>
</dbReference>
<dbReference type="Pfam" id="PF02771">
    <property type="entry name" value="Acyl-CoA_dh_N"/>
    <property type="match status" value="1"/>
</dbReference>
<dbReference type="PIRSF" id="PIRSF016578">
    <property type="entry name" value="HsaA"/>
    <property type="match status" value="1"/>
</dbReference>
<dbReference type="SUPFAM" id="SSF47203">
    <property type="entry name" value="Acyl-CoA dehydrogenase C-terminal domain-like"/>
    <property type="match status" value="1"/>
</dbReference>
<dbReference type="SUPFAM" id="SSF56645">
    <property type="entry name" value="Acyl-CoA dehydrogenase NM domain-like"/>
    <property type="match status" value="1"/>
</dbReference>
<evidence type="ECO:0000269" key="1">
    <source>
    </source>
</evidence>
<evidence type="ECO:0000303" key="2">
    <source>
    </source>
</evidence>
<evidence type="ECO:0000305" key="3"/>
<evidence type="ECO:0000305" key="4">
    <source>
    </source>
</evidence>
<evidence type="ECO:0000305" key="5">
    <source>
    </source>
</evidence>
<organism>
    <name type="scientific">Streptomyces rubradiris</name>
    <name type="common">Streptomyces achromogenes subsp. rubradiris</name>
    <dbReference type="NCBI Taxonomy" id="285531"/>
    <lineage>
        <taxon>Bacteria</taxon>
        <taxon>Bacillati</taxon>
        <taxon>Actinomycetota</taxon>
        <taxon>Actinomycetes</taxon>
        <taxon>Kitasatosporales</taxon>
        <taxon>Streptomycetaceae</taxon>
        <taxon>Streptomyces</taxon>
    </lineage>
</organism>
<accession>Q2PC69</accession>
<name>NITSS_STRRR</name>
<gene>
    <name evidence="2" type="primary">rubN8</name>
</gene>
<feature type="chain" id="PRO_0000458254" description="Amino sugar nitrososynthase RubN8">
    <location>
        <begin position="1"/>
        <end position="423"/>
    </location>
</feature>
<sequence>METEQAPRPAEPPGDLTTAITAPGEQLLTLLDRHLPRIRAQAAPNDRDSTFPAATFHGFARDGVLGATVPAELGGMGVSRLHDVAVALLRVAEADASTALALHAQFSRGITLTYEWLHGPPPTRKLAERLLRAMARGEAVIGGAVKDHGRETTRLRPDGSGGWLLSGRKTLVTMAPIATHFVVSAQAPAAGGTTLLYAPIVARDTPGLSIVDGWTGLGMRASGTLDVAFDDCPVPAGNLLARGSVGAHSDAALAGQAVSSVAMLGIYVGVAQAARDLAVETMARRSATPPAASRTLVAETEARLYALRATASAALVNVDELSPRHDMDPDERGRRMMTPFQCAKVMVNQLAAAVVDDCLTVVGGATYAAEHPLARLSRDVRAGRFMQPYTYADGVDYLSAQALGLERDNNYVSLRATRPVDSR</sequence>
<reference key="1">
    <citation type="journal article" date="2008" name="Arch. Microbiol.">
        <title>Biosynthesis of rubradirin as an ansamycin antibiotic from Streptomyces achromogenes var. rubradiris NRRL3061.</title>
        <authorList>
            <person name="Kim C.G."/>
            <person name="Lamichhane J."/>
            <person name="Song K.I."/>
            <person name="Nguyen V.D."/>
            <person name="Kim D.H."/>
            <person name="Jeong T.S."/>
            <person name="Kang S.H."/>
            <person name="Kim K.W."/>
            <person name="Maharjan J."/>
            <person name="Hong Y.S."/>
            <person name="Kang J.S."/>
            <person name="Yoo J.C."/>
            <person name="Lee J.J."/>
            <person name="Oh T.J."/>
            <person name="Liou K."/>
            <person name="Sohng J.K."/>
        </authorList>
    </citation>
    <scope>NUCLEOTIDE SEQUENCE [GENOMIC DNA]</scope>
    <scope>PATHWAY</scope>
    <scope>PRELIMINARY FUNCTION</scope>
    <source>
        <strain>DSM 40789 / JCM 4955 / NBRC 14000 / NCIMB 9516 / NRRL 3061 / UC 2630</strain>
    </source>
</reference>
<reference key="2">
    <citation type="journal article" date="2008" name="J. Am. Chem. Soc.">
        <title>A unifying nitrososynthase involved in nitrosugar biosynthesis.</title>
        <authorList>
            <person name="Hu Y."/>
            <person name="Al-Mestarihi A."/>
            <person name="Grimes C.L."/>
            <person name="Kahne D."/>
            <person name="Bachmann B.O."/>
        </authorList>
    </citation>
    <scope>FUNCTION AS A NITROSYNTHASE</scope>
    <scope>COFACTOR</scope>
    <source>
        <strain>DSM 40789 / JCM 4955 / NBRC 14000 / NCIMB 9516 / NRRL 3061 / UC 2630</strain>
    </source>
</reference>
<keyword id="KW-0045">Antibiotic biosynthesis</keyword>
<keyword id="KW-0274">FAD</keyword>
<keyword id="KW-0285">Flavoprotein</keyword>
<keyword id="KW-0503">Monooxygenase</keyword>
<keyword id="KW-0560">Oxidoreductase</keyword>